<reference key="1">
    <citation type="journal article" date="2006" name="Proc. Natl. Acad. Sci. U.S.A.">
        <title>Genomic analysis of the uncultivated marine crenarchaeote Cenarchaeum symbiosum.</title>
        <authorList>
            <person name="Hallam S.J."/>
            <person name="Konstantinidis K.T."/>
            <person name="Putnam N."/>
            <person name="Schleper C."/>
            <person name="Watanabe Y."/>
            <person name="Sugahara J."/>
            <person name="Preston C."/>
            <person name="de la Torre J."/>
            <person name="Richardson P.M."/>
            <person name="DeLong E.F."/>
        </authorList>
    </citation>
    <scope>NUCLEOTIDE SEQUENCE [LARGE SCALE GENOMIC DNA]</scope>
    <source>
        <strain>A</strain>
    </source>
</reference>
<keyword id="KW-0028">Amino-acid biosynthesis</keyword>
<keyword id="KW-0963">Cytoplasm</keyword>
<keyword id="KW-0368">Histidine biosynthesis</keyword>
<keyword id="KW-0413">Isomerase</keyword>
<keyword id="KW-1185">Reference proteome</keyword>
<name>HIS4_CENSY</name>
<gene>
    <name evidence="1" type="primary">hisA</name>
    <name type="ordered locus">CENSYa_2041</name>
</gene>
<organism>
    <name type="scientific">Cenarchaeum symbiosum (strain A)</name>
    <dbReference type="NCBI Taxonomy" id="414004"/>
    <lineage>
        <taxon>Archaea</taxon>
        <taxon>Nitrososphaerota</taxon>
        <taxon>Candidatus Cenarchaeales</taxon>
        <taxon>Candidatus Cenarchaeaceae</taxon>
        <taxon>Candidatus Cenarchaeum</taxon>
    </lineage>
</organism>
<feature type="chain" id="PRO_0000290571" description="1-(5-phosphoribosyl)-5-[(5-phosphoribosylamino)methylideneamino] imidazole-4-carboxamide isomerase">
    <location>
        <begin position="1"/>
        <end position="234"/>
    </location>
</feature>
<feature type="active site" description="Proton acceptor" evidence="1">
    <location>
        <position position="8"/>
    </location>
</feature>
<feature type="active site" description="Proton donor" evidence="1">
    <location>
        <position position="128"/>
    </location>
</feature>
<accession>A0RZ77</accession>
<proteinExistence type="inferred from homology"/>
<evidence type="ECO:0000255" key="1">
    <source>
        <dbReference type="HAMAP-Rule" id="MF_01014"/>
    </source>
</evidence>
<dbReference type="EC" id="5.3.1.16" evidence="1"/>
<dbReference type="EMBL" id="DP000238">
    <property type="protein sequence ID" value="ABK78644.1"/>
    <property type="molecule type" value="Genomic_DNA"/>
</dbReference>
<dbReference type="SMR" id="A0RZ77"/>
<dbReference type="STRING" id="414004.CENSYa_2041"/>
<dbReference type="EnsemblBacteria" id="ABK78644">
    <property type="protein sequence ID" value="ABK78644"/>
    <property type="gene ID" value="CENSYa_2041"/>
</dbReference>
<dbReference type="KEGG" id="csy:CENSYa_2041"/>
<dbReference type="PATRIC" id="fig|414004.10.peg.1873"/>
<dbReference type="HOGENOM" id="CLU_048577_1_2_2"/>
<dbReference type="UniPathway" id="UPA00031">
    <property type="reaction ID" value="UER00009"/>
</dbReference>
<dbReference type="Proteomes" id="UP000000758">
    <property type="component" value="Chromosome"/>
</dbReference>
<dbReference type="GO" id="GO:0005737">
    <property type="term" value="C:cytoplasm"/>
    <property type="evidence" value="ECO:0007669"/>
    <property type="project" value="UniProtKB-SubCell"/>
</dbReference>
<dbReference type="GO" id="GO:0003949">
    <property type="term" value="F:1-(5-phosphoribosyl)-5-[(5-phosphoribosylamino)methylideneamino]imidazole-4-carboxamide isomerase activity"/>
    <property type="evidence" value="ECO:0007669"/>
    <property type="project" value="UniProtKB-UniRule"/>
</dbReference>
<dbReference type="GO" id="GO:0000105">
    <property type="term" value="P:L-histidine biosynthetic process"/>
    <property type="evidence" value="ECO:0007669"/>
    <property type="project" value="UniProtKB-UniRule"/>
</dbReference>
<dbReference type="GO" id="GO:0000162">
    <property type="term" value="P:L-tryptophan biosynthetic process"/>
    <property type="evidence" value="ECO:0007669"/>
    <property type="project" value="TreeGrafter"/>
</dbReference>
<dbReference type="CDD" id="cd04732">
    <property type="entry name" value="HisA"/>
    <property type="match status" value="1"/>
</dbReference>
<dbReference type="FunFam" id="3.20.20.70:FF:000009">
    <property type="entry name" value="1-(5-phosphoribosyl)-5-[(5-phosphoribosylamino)methylideneamino] imidazole-4-carboxamide isomerase"/>
    <property type="match status" value="1"/>
</dbReference>
<dbReference type="Gene3D" id="3.20.20.70">
    <property type="entry name" value="Aldolase class I"/>
    <property type="match status" value="1"/>
</dbReference>
<dbReference type="HAMAP" id="MF_01014">
    <property type="entry name" value="HisA"/>
    <property type="match status" value="1"/>
</dbReference>
<dbReference type="InterPro" id="IPR013785">
    <property type="entry name" value="Aldolase_TIM"/>
</dbReference>
<dbReference type="InterPro" id="IPR006062">
    <property type="entry name" value="His_biosynth"/>
</dbReference>
<dbReference type="InterPro" id="IPR006063">
    <property type="entry name" value="HisA_bact_arch"/>
</dbReference>
<dbReference type="InterPro" id="IPR044524">
    <property type="entry name" value="Isoase_HisA-like"/>
</dbReference>
<dbReference type="InterPro" id="IPR023016">
    <property type="entry name" value="Isoase_HisA-like_bact"/>
</dbReference>
<dbReference type="InterPro" id="IPR011060">
    <property type="entry name" value="RibuloseP-bd_barrel"/>
</dbReference>
<dbReference type="NCBIfam" id="TIGR00007">
    <property type="entry name" value="1-(5-phosphoribosyl)-5-[(5-phosphoribosylamino)methylideneamino]imidazole-4-carboxamide isomerase"/>
    <property type="match status" value="1"/>
</dbReference>
<dbReference type="PANTHER" id="PTHR43090">
    <property type="entry name" value="1-(5-PHOSPHORIBOSYL)-5-[(5-PHOSPHORIBOSYLAMINO)METHYLIDENEAMINO] IMIDAZOLE-4-CARBOXAMIDE ISOMERASE"/>
    <property type="match status" value="1"/>
</dbReference>
<dbReference type="PANTHER" id="PTHR43090:SF2">
    <property type="entry name" value="1-(5-PHOSPHORIBOSYL)-5-[(5-PHOSPHORIBOSYLAMINO)METHYLIDENEAMINO] IMIDAZOLE-4-CARBOXAMIDE ISOMERASE"/>
    <property type="match status" value="1"/>
</dbReference>
<dbReference type="Pfam" id="PF00977">
    <property type="entry name" value="His_biosynth"/>
    <property type="match status" value="1"/>
</dbReference>
<dbReference type="SUPFAM" id="SSF51366">
    <property type="entry name" value="Ribulose-phoshate binding barrel"/>
    <property type="match status" value="1"/>
</dbReference>
<protein>
    <recommendedName>
        <fullName evidence="1">1-(5-phosphoribosyl)-5-[(5-phosphoribosylamino)methylideneamino] imidazole-4-carboxamide isomerase</fullName>
        <ecNumber evidence="1">5.3.1.16</ecNumber>
    </recommendedName>
    <alternativeName>
        <fullName evidence="1">Phosphoribosylformimino-5-aminoimidazole carboxamide ribotide isomerase</fullName>
    </alternativeName>
</protein>
<sequence length="234" mass="24969">MKVIPAIDLMDGQVVRLRRGKAKDKTVYSDDPVKVALTWEKDGADMLHIVDLDATLGRGNNIDMIRNITDAVSIPVEAAGGLRSIDLVAGALEGADRVVLGTLAFRDRDALREILESYGSKKIVISVDHVKGKIMVDGWRENTGINLVDAMQGFVGAGFTEFLLTDVDRDGMMQGPETDTLGKVCRMSDSHVIASGGITVPGDVKSVRDAGAWGVILGKALYEGKVSVKGAISC</sequence>
<comment type="catalytic activity">
    <reaction evidence="1">
        <text>1-(5-phospho-beta-D-ribosyl)-5-[(5-phospho-beta-D-ribosylamino)methylideneamino]imidazole-4-carboxamide = 5-[(5-phospho-1-deoxy-D-ribulos-1-ylimino)methylamino]-1-(5-phospho-beta-D-ribosyl)imidazole-4-carboxamide</text>
        <dbReference type="Rhea" id="RHEA:15469"/>
        <dbReference type="ChEBI" id="CHEBI:58435"/>
        <dbReference type="ChEBI" id="CHEBI:58525"/>
        <dbReference type="EC" id="5.3.1.16"/>
    </reaction>
</comment>
<comment type="pathway">
    <text evidence="1">Amino-acid biosynthesis; L-histidine biosynthesis; L-histidine from 5-phospho-alpha-D-ribose 1-diphosphate: step 4/9.</text>
</comment>
<comment type="subcellular location">
    <subcellularLocation>
        <location evidence="1">Cytoplasm</location>
    </subcellularLocation>
</comment>
<comment type="similarity">
    <text evidence="1">Belongs to the HisA/HisF family.</text>
</comment>